<sequence>MKSGEKDYSVKEAMIFSQRIAQLSKALWKCVEKDWQMWIKPYDLNINEHHILTIAYHLKGASISEIAKFGVMHVSTAFNFSKKLEERGYLVFSKKEDDKRNTYIEITDKGEELLLRLMEEYDPENNSVFNGALALRNFYGKFPENIELIAILRNIYGQDFIDIFEKSLEDIEENFTESDQKLVKK</sequence>
<organism>
    <name type="scientific">Bacillus cereus (strain ZK / E33L)</name>
    <dbReference type="NCBI Taxonomy" id="288681"/>
    <lineage>
        <taxon>Bacteria</taxon>
        <taxon>Bacillati</taxon>
        <taxon>Bacillota</taxon>
        <taxon>Bacilli</taxon>
        <taxon>Bacillales</taxon>
        <taxon>Bacillaceae</taxon>
        <taxon>Bacillus</taxon>
        <taxon>Bacillus cereus group</taxon>
    </lineage>
</organism>
<dbReference type="EMBL" id="CP000001">
    <property type="protein sequence ID" value="AAU19293.1"/>
    <property type="molecule type" value="Genomic_DNA"/>
</dbReference>
<dbReference type="RefSeq" id="WP_000834918.1">
    <property type="nucleotide sequence ID" value="NZ_CP009968.1"/>
</dbReference>
<dbReference type="SMR" id="Q63EV6"/>
<dbReference type="KEGG" id="bcz:BCE33L0955"/>
<dbReference type="PATRIC" id="fig|288681.22.peg.4617"/>
<dbReference type="Proteomes" id="UP000002612">
    <property type="component" value="Chromosome"/>
</dbReference>
<dbReference type="GO" id="GO:0003677">
    <property type="term" value="F:DNA binding"/>
    <property type="evidence" value="ECO:0007669"/>
    <property type="project" value="UniProtKB-UniRule"/>
</dbReference>
<dbReference type="GO" id="GO:0003700">
    <property type="term" value="F:DNA-binding transcription factor activity"/>
    <property type="evidence" value="ECO:0007669"/>
    <property type="project" value="UniProtKB-UniRule"/>
</dbReference>
<dbReference type="GO" id="GO:0045892">
    <property type="term" value="P:negative regulation of DNA-templated transcription"/>
    <property type="evidence" value="ECO:0007669"/>
    <property type="project" value="UniProtKB-UniRule"/>
</dbReference>
<dbReference type="GO" id="GO:0006950">
    <property type="term" value="P:response to stress"/>
    <property type="evidence" value="ECO:0007669"/>
    <property type="project" value="TreeGrafter"/>
</dbReference>
<dbReference type="GO" id="GO:0030435">
    <property type="term" value="P:sporulation resulting in formation of a cellular spore"/>
    <property type="evidence" value="ECO:0007669"/>
    <property type="project" value="UniProtKB-UniRule"/>
</dbReference>
<dbReference type="FunFam" id="1.10.10.10:FF:000194">
    <property type="entry name" value="HTH-type transcriptional regulator Hpr"/>
    <property type="match status" value="1"/>
</dbReference>
<dbReference type="Gene3D" id="1.10.10.10">
    <property type="entry name" value="Winged helix-like DNA-binding domain superfamily/Winged helix DNA-binding domain"/>
    <property type="match status" value="1"/>
</dbReference>
<dbReference type="HAMAP" id="MF_01911">
    <property type="entry name" value="HTH_type_Hpr"/>
    <property type="match status" value="1"/>
</dbReference>
<dbReference type="InterPro" id="IPR000835">
    <property type="entry name" value="HTH_MarR-typ"/>
</dbReference>
<dbReference type="InterPro" id="IPR023488">
    <property type="entry name" value="HTH_tscrpt_reg_Hpr"/>
</dbReference>
<dbReference type="InterPro" id="IPR039422">
    <property type="entry name" value="MarR/SlyA-like"/>
</dbReference>
<dbReference type="InterPro" id="IPR023187">
    <property type="entry name" value="Tscrpt_reg_MarR-type_CS"/>
</dbReference>
<dbReference type="InterPro" id="IPR036388">
    <property type="entry name" value="WH-like_DNA-bd_sf"/>
</dbReference>
<dbReference type="InterPro" id="IPR036390">
    <property type="entry name" value="WH_DNA-bd_sf"/>
</dbReference>
<dbReference type="NCBIfam" id="NF010349">
    <property type="entry name" value="PRK13777.1"/>
    <property type="match status" value="1"/>
</dbReference>
<dbReference type="PANTHER" id="PTHR33164:SF58">
    <property type="entry name" value="DNA-BINDING TRANSCRIPTIONAL REPRESSOR SCOC"/>
    <property type="match status" value="1"/>
</dbReference>
<dbReference type="PANTHER" id="PTHR33164">
    <property type="entry name" value="TRANSCRIPTIONAL REGULATOR, MARR FAMILY"/>
    <property type="match status" value="1"/>
</dbReference>
<dbReference type="Pfam" id="PF01047">
    <property type="entry name" value="MarR"/>
    <property type="match status" value="1"/>
</dbReference>
<dbReference type="SMART" id="SM00347">
    <property type="entry name" value="HTH_MARR"/>
    <property type="match status" value="1"/>
</dbReference>
<dbReference type="SUPFAM" id="SSF46785">
    <property type="entry name" value="Winged helix' DNA-binding domain"/>
    <property type="match status" value="1"/>
</dbReference>
<dbReference type="PROSITE" id="PS01117">
    <property type="entry name" value="HTH_MARR_1"/>
    <property type="match status" value="1"/>
</dbReference>
<dbReference type="PROSITE" id="PS50995">
    <property type="entry name" value="HTH_MARR_2"/>
    <property type="match status" value="1"/>
</dbReference>
<evidence type="ECO:0000255" key="1">
    <source>
        <dbReference type="HAMAP-Rule" id="MF_01911"/>
    </source>
</evidence>
<comment type="function">
    <text evidence="1">Negative regulator of protease production and sporulation.</text>
</comment>
<comment type="subunit">
    <text evidence="1">Homodimer.</text>
</comment>
<name>HPR_BACCZ</name>
<accession>Q63EV6</accession>
<protein>
    <recommendedName>
        <fullName evidence="1">HTH-type transcriptional regulator Hpr</fullName>
    </recommendedName>
    <alternativeName>
        <fullName evidence="1">Protease production regulatory protein Hpr</fullName>
    </alternativeName>
</protein>
<gene>
    <name evidence="1" type="primary">hpr</name>
    <name type="ordered locus">BCE33L0955</name>
</gene>
<proteinExistence type="inferred from homology"/>
<keyword id="KW-0238">DNA-binding</keyword>
<keyword id="KW-0678">Repressor</keyword>
<keyword id="KW-0749">Sporulation</keyword>
<keyword id="KW-0804">Transcription</keyword>
<keyword id="KW-0805">Transcription regulation</keyword>
<reference key="1">
    <citation type="journal article" date="2006" name="J. Bacteriol.">
        <title>Pathogenomic sequence analysis of Bacillus cereus and Bacillus thuringiensis isolates closely related to Bacillus anthracis.</title>
        <authorList>
            <person name="Han C.S."/>
            <person name="Xie G."/>
            <person name="Challacombe J.F."/>
            <person name="Altherr M.R."/>
            <person name="Bhotika S.S."/>
            <person name="Bruce D."/>
            <person name="Campbell C.S."/>
            <person name="Campbell M.L."/>
            <person name="Chen J."/>
            <person name="Chertkov O."/>
            <person name="Cleland C."/>
            <person name="Dimitrijevic M."/>
            <person name="Doggett N.A."/>
            <person name="Fawcett J.J."/>
            <person name="Glavina T."/>
            <person name="Goodwin L.A."/>
            <person name="Hill K.K."/>
            <person name="Hitchcock P."/>
            <person name="Jackson P.J."/>
            <person name="Keim P."/>
            <person name="Kewalramani A.R."/>
            <person name="Longmire J."/>
            <person name="Lucas S."/>
            <person name="Malfatti S."/>
            <person name="McMurry K."/>
            <person name="Meincke L.J."/>
            <person name="Misra M."/>
            <person name="Moseman B.L."/>
            <person name="Mundt M."/>
            <person name="Munk A.C."/>
            <person name="Okinaka R.T."/>
            <person name="Parson-Quintana B."/>
            <person name="Reilly L.P."/>
            <person name="Richardson P."/>
            <person name="Robinson D.L."/>
            <person name="Rubin E."/>
            <person name="Saunders E."/>
            <person name="Tapia R."/>
            <person name="Tesmer J.G."/>
            <person name="Thayer N."/>
            <person name="Thompson L.S."/>
            <person name="Tice H."/>
            <person name="Ticknor L.O."/>
            <person name="Wills P.L."/>
            <person name="Brettin T.S."/>
            <person name="Gilna P."/>
        </authorList>
    </citation>
    <scope>NUCLEOTIDE SEQUENCE [LARGE SCALE GENOMIC DNA]</scope>
    <source>
        <strain>ZK / E33L</strain>
    </source>
</reference>
<feature type="chain" id="PRO_0000343620" description="HTH-type transcriptional regulator Hpr">
    <location>
        <begin position="1"/>
        <end position="185"/>
    </location>
</feature>
<feature type="domain" description="HTH marR-type" evidence="1">
    <location>
        <begin position="13"/>
        <end position="157"/>
    </location>
</feature>
<feature type="DNA-binding region" description="H-T-H motif" evidence="1">
    <location>
        <begin position="63"/>
        <end position="86"/>
    </location>
</feature>